<gene>
    <name evidence="1" type="primary">grcA</name>
    <name type="ordered locus">VV1_0542</name>
</gene>
<accession>Q8DEP5</accession>
<dbReference type="EMBL" id="AE016795">
    <property type="protein sequence ID" value="AAO09059.1"/>
    <property type="molecule type" value="Genomic_DNA"/>
</dbReference>
<dbReference type="RefSeq" id="WP_011078629.1">
    <property type="nucleotide sequence ID" value="NC_004459.3"/>
</dbReference>
<dbReference type="SMR" id="Q8DEP5"/>
<dbReference type="GeneID" id="93894854"/>
<dbReference type="KEGG" id="vvu:VV1_0542"/>
<dbReference type="HOGENOM" id="CLU_133780_0_0_6"/>
<dbReference type="Proteomes" id="UP000002275">
    <property type="component" value="Chromosome 1"/>
</dbReference>
<dbReference type="GO" id="GO:0005829">
    <property type="term" value="C:cytosol"/>
    <property type="evidence" value="ECO:0007669"/>
    <property type="project" value="TreeGrafter"/>
</dbReference>
<dbReference type="GO" id="GO:0008861">
    <property type="term" value="F:formate C-acetyltransferase activity"/>
    <property type="evidence" value="ECO:0007669"/>
    <property type="project" value="TreeGrafter"/>
</dbReference>
<dbReference type="FunFam" id="3.20.70.20:FF:000002">
    <property type="entry name" value="Autonomous glycyl radical cofactor"/>
    <property type="match status" value="1"/>
</dbReference>
<dbReference type="Gene3D" id="3.20.70.20">
    <property type="match status" value="1"/>
</dbReference>
<dbReference type="HAMAP" id="MF_00806">
    <property type="entry name" value="GrcA"/>
    <property type="match status" value="1"/>
</dbReference>
<dbReference type="InterPro" id="IPR050244">
    <property type="entry name" value="Auton_GlycylRad_Cofactor"/>
</dbReference>
<dbReference type="InterPro" id="IPR019777">
    <property type="entry name" value="Form_AcTrfase_GR_CS"/>
</dbReference>
<dbReference type="InterPro" id="IPR001150">
    <property type="entry name" value="Gly_radical"/>
</dbReference>
<dbReference type="InterPro" id="IPR011140">
    <property type="entry name" value="Glycyl_radical_cofactor_GrcA"/>
</dbReference>
<dbReference type="NCBIfam" id="TIGR04365">
    <property type="entry name" value="spare_glycyl"/>
    <property type="match status" value="1"/>
</dbReference>
<dbReference type="PANTHER" id="PTHR30191">
    <property type="entry name" value="FORMATE ACETYLTRANSFERASE"/>
    <property type="match status" value="1"/>
</dbReference>
<dbReference type="PANTHER" id="PTHR30191:SF0">
    <property type="entry name" value="FORMATE ACETYLTRANSFERASE 1"/>
    <property type="match status" value="1"/>
</dbReference>
<dbReference type="Pfam" id="PF01228">
    <property type="entry name" value="Gly_radical"/>
    <property type="match status" value="1"/>
</dbReference>
<dbReference type="PIRSF" id="PIRSF000378">
    <property type="entry name" value="Gly_radicl_yfiD"/>
    <property type="match status" value="1"/>
</dbReference>
<dbReference type="SUPFAM" id="SSF51998">
    <property type="entry name" value="PFL-like glycyl radical enzymes"/>
    <property type="match status" value="1"/>
</dbReference>
<dbReference type="PROSITE" id="PS00850">
    <property type="entry name" value="GLY_RADICAL_1"/>
    <property type="match status" value="1"/>
</dbReference>
<dbReference type="PROSITE" id="PS51149">
    <property type="entry name" value="GLY_RADICAL_2"/>
    <property type="match status" value="1"/>
</dbReference>
<protein>
    <recommendedName>
        <fullName evidence="1">Autonomous glycyl radical cofactor</fullName>
    </recommendedName>
</protein>
<sequence>MIQGIQITKAANDDLLNSIWLLDSEKNEARCVAAVSGYEADQIVAINELGEFESREVAIEAAPRIEGGQHLNVNVLKRETLEDAVAHPEKYPQLTIRVSGYAVRFNSLTPEQQRDVIARTFTESL</sequence>
<name>GRCA_VIBVU</name>
<evidence type="ECO:0000255" key="1">
    <source>
        <dbReference type="HAMAP-Rule" id="MF_00806"/>
    </source>
</evidence>
<reference key="1">
    <citation type="submission" date="2002-12" db="EMBL/GenBank/DDBJ databases">
        <title>Complete genome sequence of Vibrio vulnificus CMCP6.</title>
        <authorList>
            <person name="Rhee J.H."/>
            <person name="Kim S.Y."/>
            <person name="Chung S.S."/>
            <person name="Kim J.J."/>
            <person name="Moon Y.H."/>
            <person name="Jeong H."/>
            <person name="Choy H.E."/>
        </authorList>
    </citation>
    <scope>NUCLEOTIDE SEQUENCE [LARGE SCALE GENOMIC DNA]</scope>
    <source>
        <strain>CMCP6</strain>
    </source>
</reference>
<organism>
    <name type="scientific">Vibrio vulnificus (strain CMCP6)</name>
    <dbReference type="NCBI Taxonomy" id="216895"/>
    <lineage>
        <taxon>Bacteria</taxon>
        <taxon>Pseudomonadati</taxon>
        <taxon>Pseudomonadota</taxon>
        <taxon>Gammaproteobacteria</taxon>
        <taxon>Vibrionales</taxon>
        <taxon>Vibrionaceae</taxon>
        <taxon>Vibrio</taxon>
    </lineage>
</organism>
<keyword id="KW-0556">Organic radical</keyword>
<proteinExistence type="inferred from homology"/>
<comment type="function">
    <text evidence="1">Acts as a radical domain for damaged PFL and possibly other radical proteins.</text>
</comment>
<feature type="chain" id="PRO_0000166713" description="Autonomous glycyl radical cofactor">
    <location>
        <begin position="1"/>
        <end position="125"/>
    </location>
</feature>
<feature type="domain" description="Glycine radical" evidence="1">
    <location>
        <begin position="5"/>
        <end position="125"/>
    </location>
</feature>
<feature type="modified residue" description="Glycine radical" evidence="1">
    <location>
        <position position="100"/>
    </location>
</feature>